<evidence type="ECO:0000255" key="1">
    <source>
        <dbReference type="HAMAP-Rule" id="MF_01659"/>
    </source>
</evidence>
<sequence length="568" mass="60205">MQGLIELGLRRLVLCPGSRSGSLATAAGLLASSGQLQLNTAIDERSAAFLALGLATAGGSAVAVVTTSGTAVANLLPAVIEADRSCQPLLVITADRPIRLKACGANQTVNQEDFLRPACRWCGNGAPEGLHAMASHAVLELAALAWSQAHGADQAAAGPVHLNLPVEEPIHAPLQEHQPLLDAVLASDEASLFPLQPSTIQSNRDVPRLDPSRPGVVIAGPWRGLAQDLSAHQQAVRSWLVCSGWPLLADPLSALPVELPGRLHHWDLQLEQLISPEPLQVLRLGPLPASRRLEVWLKRNAGDQVLITEGEPRYMDPLGLATQWSGGLAAWCCAQPLDQASRPLSADHSAWLRRDQALGLWLEEQLVSEGPVSEPALAFQLADLLPPGLPVMLSASSPVRDWLTWSGRSGSDRRCFSFRGASGIDGTLSLAMGLALETGPMLLVTGDLALLHDSNGWLHGQSDGPPLVVLLIDNGGGGIFQQLPIEQASPKRFDALFAMPQRVNPIALAAAHGVPGRSIAVIDDLPEALSWALAQQGPVLLRVCTDRHADAAFRRKLRSAAQNVEPGV</sequence>
<accession>Q3AVF6</accession>
<comment type="function">
    <text evidence="1">Catalyzes the thiamine diphosphate-dependent decarboxylation of 2-oxoglutarate and the subsequent addition of the resulting succinic semialdehyde-thiamine pyrophosphate anion to isochorismate to yield 2-succinyl-5-enolpyruvyl-6-hydroxy-3-cyclohexene-1-carboxylate (SEPHCHC).</text>
</comment>
<comment type="catalytic activity">
    <reaction evidence="1">
        <text>isochorismate + 2-oxoglutarate + H(+) = 5-enolpyruvoyl-6-hydroxy-2-succinyl-cyclohex-3-ene-1-carboxylate + CO2</text>
        <dbReference type="Rhea" id="RHEA:25593"/>
        <dbReference type="ChEBI" id="CHEBI:15378"/>
        <dbReference type="ChEBI" id="CHEBI:16526"/>
        <dbReference type="ChEBI" id="CHEBI:16810"/>
        <dbReference type="ChEBI" id="CHEBI:29780"/>
        <dbReference type="ChEBI" id="CHEBI:58818"/>
        <dbReference type="EC" id="2.2.1.9"/>
    </reaction>
</comment>
<comment type="cofactor">
    <cofactor evidence="1">
        <name>Mg(2+)</name>
        <dbReference type="ChEBI" id="CHEBI:18420"/>
    </cofactor>
    <cofactor evidence="1">
        <name>Mn(2+)</name>
        <dbReference type="ChEBI" id="CHEBI:29035"/>
    </cofactor>
</comment>
<comment type="cofactor">
    <cofactor evidence="1">
        <name>thiamine diphosphate</name>
        <dbReference type="ChEBI" id="CHEBI:58937"/>
    </cofactor>
    <text evidence="1">Binds 1 thiamine pyrophosphate per subunit.</text>
</comment>
<comment type="pathway">
    <text evidence="1">Quinol/quinone metabolism; 1,4-dihydroxy-2-naphthoate biosynthesis; 1,4-dihydroxy-2-naphthoate from chorismate: step 2/7.</text>
</comment>
<comment type="pathway">
    <text evidence="1">Cofactor biosynthesis; phylloquinone biosynthesis.</text>
</comment>
<comment type="subunit">
    <text evidence="1">Homodimer.</text>
</comment>
<comment type="similarity">
    <text evidence="1">Belongs to the TPP enzyme family. MenD subfamily.</text>
</comment>
<organism>
    <name type="scientific">Synechococcus sp. (strain CC9902)</name>
    <dbReference type="NCBI Taxonomy" id="316279"/>
    <lineage>
        <taxon>Bacteria</taxon>
        <taxon>Bacillati</taxon>
        <taxon>Cyanobacteriota</taxon>
        <taxon>Cyanophyceae</taxon>
        <taxon>Synechococcales</taxon>
        <taxon>Synechococcaceae</taxon>
        <taxon>Synechococcus</taxon>
    </lineage>
</organism>
<protein>
    <recommendedName>
        <fullName evidence="1">2-succinyl-5-enolpyruvyl-6-hydroxy-3-cyclohexene-1-carboxylate synthase</fullName>
        <shortName evidence="1">SEPHCHC synthase</shortName>
        <ecNumber evidence="1">2.2.1.9</ecNumber>
    </recommendedName>
</protein>
<dbReference type="EC" id="2.2.1.9" evidence="1"/>
<dbReference type="EMBL" id="CP000097">
    <property type="protein sequence ID" value="ABB26298.1"/>
    <property type="molecule type" value="Genomic_DNA"/>
</dbReference>
<dbReference type="RefSeq" id="WP_011360121.1">
    <property type="nucleotide sequence ID" value="NC_007513.1"/>
</dbReference>
<dbReference type="SMR" id="Q3AVF6"/>
<dbReference type="STRING" id="316279.Syncc9902_1334"/>
<dbReference type="KEGG" id="sye:Syncc9902_1334"/>
<dbReference type="eggNOG" id="COG1165">
    <property type="taxonomic scope" value="Bacteria"/>
</dbReference>
<dbReference type="HOGENOM" id="CLU_006051_4_0_3"/>
<dbReference type="OrthoDB" id="9791859at2"/>
<dbReference type="UniPathway" id="UPA00995"/>
<dbReference type="UniPathway" id="UPA01057">
    <property type="reaction ID" value="UER00164"/>
</dbReference>
<dbReference type="Proteomes" id="UP000002712">
    <property type="component" value="Chromosome"/>
</dbReference>
<dbReference type="GO" id="GO:0070204">
    <property type="term" value="F:2-succinyl-5-enolpyruvyl-6-hydroxy-3-cyclohexene-1-carboxylic-acid synthase activity"/>
    <property type="evidence" value="ECO:0007669"/>
    <property type="project" value="UniProtKB-UniRule"/>
</dbReference>
<dbReference type="GO" id="GO:0000287">
    <property type="term" value="F:magnesium ion binding"/>
    <property type="evidence" value="ECO:0007669"/>
    <property type="project" value="UniProtKB-UniRule"/>
</dbReference>
<dbReference type="GO" id="GO:0030145">
    <property type="term" value="F:manganese ion binding"/>
    <property type="evidence" value="ECO:0007669"/>
    <property type="project" value="UniProtKB-UniRule"/>
</dbReference>
<dbReference type="GO" id="GO:0030976">
    <property type="term" value="F:thiamine pyrophosphate binding"/>
    <property type="evidence" value="ECO:0007669"/>
    <property type="project" value="UniProtKB-UniRule"/>
</dbReference>
<dbReference type="GO" id="GO:0009234">
    <property type="term" value="P:menaquinone biosynthetic process"/>
    <property type="evidence" value="ECO:0007669"/>
    <property type="project" value="InterPro"/>
</dbReference>
<dbReference type="GO" id="GO:0042372">
    <property type="term" value="P:phylloquinone biosynthetic process"/>
    <property type="evidence" value="ECO:0007669"/>
    <property type="project" value="UniProtKB-UniRule"/>
</dbReference>
<dbReference type="CDD" id="cd07037">
    <property type="entry name" value="TPP_PYR_MenD"/>
    <property type="match status" value="1"/>
</dbReference>
<dbReference type="CDD" id="cd02009">
    <property type="entry name" value="TPP_SHCHC_synthase"/>
    <property type="match status" value="1"/>
</dbReference>
<dbReference type="Gene3D" id="3.40.50.970">
    <property type="match status" value="2"/>
</dbReference>
<dbReference type="Gene3D" id="3.40.50.1220">
    <property type="entry name" value="TPP-binding domain"/>
    <property type="match status" value="1"/>
</dbReference>
<dbReference type="HAMAP" id="MF_01659">
    <property type="entry name" value="MenD"/>
    <property type="match status" value="1"/>
</dbReference>
<dbReference type="InterPro" id="IPR004433">
    <property type="entry name" value="MenaQ_synth_MenD"/>
</dbReference>
<dbReference type="InterPro" id="IPR032264">
    <property type="entry name" value="MenD_middle"/>
</dbReference>
<dbReference type="InterPro" id="IPR029061">
    <property type="entry name" value="THDP-binding"/>
</dbReference>
<dbReference type="InterPro" id="IPR012001">
    <property type="entry name" value="Thiamin_PyroP_enz_TPP-bd_dom"/>
</dbReference>
<dbReference type="InterPro" id="IPR011766">
    <property type="entry name" value="TPP_enzyme_TPP-bd"/>
</dbReference>
<dbReference type="NCBIfam" id="TIGR00173">
    <property type="entry name" value="menD"/>
    <property type="match status" value="1"/>
</dbReference>
<dbReference type="PANTHER" id="PTHR42916">
    <property type="entry name" value="2-SUCCINYL-5-ENOLPYRUVYL-6-HYDROXY-3-CYCLOHEXENE-1-CARBOXYLATE SYNTHASE"/>
    <property type="match status" value="1"/>
</dbReference>
<dbReference type="PANTHER" id="PTHR42916:SF1">
    <property type="entry name" value="PROTEIN PHYLLO, CHLOROPLASTIC"/>
    <property type="match status" value="1"/>
</dbReference>
<dbReference type="Pfam" id="PF02775">
    <property type="entry name" value="TPP_enzyme_C"/>
    <property type="match status" value="1"/>
</dbReference>
<dbReference type="Pfam" id="PF16582">
    <property type="entry name" value="TPP_enzyme_M_2"/>
    <property type="match status" value="1"/>
</dbReference>
<dbReference type="Pfam" id="PF02776">
    <property type="entry name" value="TPP_enzyme_N"/>
    <property type="match status" value="1"/>
</dbReference>
<dbReference type="PIRSF" id="PIRSF004983">
    <property type="entry name" value="MenD"/>
    <property type="match status" value="1"/>
</dbReference>
<dbReference type="SUPFAM" id="SSF52518">
    <property type="entry name" value="Thiamin diphosphate-binding fold (THDP-binding)"/>
    <property type="match status" value="2"/>
</dbReference>
<feature type="chain" id="PRO_0000341871" description="2-succinyl-5-enolpyruvyl-6-hydroxy-3-cyclohexene-1-carboxylate synthase">
    <location>
        <begin position="1"/>
        <end position="568"/>
    </location>
</feature>
<proteinExistence type="inferred from homology"/>
<reference key="1">
    <citation type="submission" date="2005-08" db="EMBL/GenBank/DDBJ databases">
        <title>Complete sequence of Synechococcus sp. CC9902.</title>
        <authorList>
            <person name="Copeland A."/>
            <person name="Lucas S."/>
            <person name="Lapidus A."/>
            <person name="Barry K."/>
            <person name="Detter J.C."/>
            <person name="Glavina T."/>
            <person name="Hammon N."/>
            <person name="Israni S."/>
            <person name="Pitluck S."/>
            <person name="Martinez M."/>
            <person name="Schmutz J."/>
            <person name="Larimer F."/>
            <person name="Land M."/>
            <person name="Kyrpides N."/>
            <person name="Ivanova N."/>
            <person name="Richardson P."/>
        </authorList>
    </citation>
    <scope>NUCLEOTIDE SEQUENCE [LARGE SCALE GENOMIC DNA]</scope>
    <source>
        <strain>CC9902</strain>
    </source>
</reference>
<gene>
    <name evidence="1" type="primary">menD</name>
    <name type="ordered locus">Syncc9902_1334</name>
</gene>
<keyword id="KW-0460">Magnesium</keyword>
<keyword id="KW-0464">Manganese</keyword>
<keyword id="KW-0479">Metal-binding</keyword>
<keyword id="KW-1185">Reference proteome</keyword>
<keyword id="KW-0786">Thiamine pyrophosphate</keyword>
<keyword id="KW-0808">Transferase</keyword>
<name>MEND_SYNS9</name>